<comment type="function">
    <text evidence="1">Catalyzes the radical-mediated insertion of two sulfur atoms into the C-6 and C-8 positions of the octanoyl moiety bound to the lipoyl domains of lipoate-dependent enzymes, thereby converting the octanoylated domains into lipoylated derivatives.</text>
</comment>
<comment type="catalytic activity">
    <reaction evidence="1">
        <text>[[Fe-S] cluster scaffold protein carrying a second [4Fe-4S](2+) cluster] + N(6)-octanoyl-L-lysyl-[protein] + 2 oxidized [2Fe-2S]-[ferredoxin] + 2 S-adenosyl-L-methionine + 4 H(+) = [[Fe-S] cluster scaffold protein] + N(6)-[(R)-dihydrolipoyl]-L-lysyl-[protein] + 4 Fe(3+) + 2 hydrogen sulfide + 2 5'-deoxyadenosine + 2 L-methionine + 2 reduced [2Fe-2S]-[ferredoxin]</text>
        <dbReference type="Rhea" id="RHEA:16585"/>
        <dbReference type="Rhea" id="RHEA-COMP:9928"/>
        <dbReference type="Rhea" id="RHEA-COMP:10000"/>
        <dbReference type="Rhea" id="RHEA-COMP:10001"/>
        <dbReference type="Rhea" id="RHEA-COMP:10475"/>
        <dbReference type="Rhea" id="RHEA-COMP:14568"/>
        <dbReference type="Rhea" id="RHEA-COMP:14569"/>
        <dbReference type="ChEBI" id="CHEBI:15378"/>
        <dbReference type="ChEBI" id="CHEBI:17319"/>
        <dbReference type="ChEBI" id="CHEBI:29034"/>
        <dbReference type="ChEBI" id="CHEBI:29919"/>
        <dbReference type="ChEBI" id="CHEBI:33722"/>
        <dbReference type="ChEBI" id="CHEBI:33737"/>
        <dbReference type="ChEBI" id="CHEBI:33738"/>
        <dbReference type="ChEBI" id="CHEBI:57844"/>
        <dbReference type="ChEBI" id="CHEBI:59789"/>
        <dbReference type="ChEBI" id="CHEBI:78809"/>
        <dbReference type="ChEBI" id="CHEBI:83100"/>
        <dbReference type="EC" id="2.8.1.8"/>
    </reaction>
</comment>
<comment type="cofactor">
    <cofactor evidence="1">
        <name>[4Fe-4S] cluster</name>
        <dbReference type="ChEBI" id="CHEBI:49883"/>
    </cofactor>
    <text evidence="1">Binds 2 [4Fe-4S] clusters per subunit. One cluster is coordinated with 3 cysteines and an exchangeable S-adenosyl-L-methionine.</text>
</comment>
<comment type="pathway">
    <text evidence="1">Protein modification; protein lipoylation via endogenous pathway; protein N(6)-(lipoyl)lysine from octanoyl-[acyl-carrier-protein]: step 2/2.</text>
</comment>
<comment type="subcellular location">
    <subcellularLocation>
        <location evidence="1">Cytoplasm</location>
    </subcellularLocation>
</comment>
<comment type="similarity">
    <text evidence="1">Belongs to the radical SAM superfamily. Lipoyl synthase family.</text>
</comment>
<comment type="sequence caution" evidence="3">
    <conflict type="erroneous initiation">
        <sequence resource="EMBL-CDS" id="BAC08165"/>
    </conflict>
</comment>
<proteinExistence type="inferred from homology"/>
<name>LIPA1_THEVB</name>
<dbReference type="EC" id="2.8.1.8" evidence="1"/>
<dbReference type="EMBL" id="BA000039">
    <property type="protein sequence ID" value="BAC08165.1"/>
    <property type="status" value="ALT_INIT"/>
    <property type="molecule type" value="Genomic_DNA"/>
</dbReference>
<dbReference type="RefSeq" id="NP_681403.1">
    <property type="nucleotide sequence ID" value="NC_004113.1"/>
</dbReference>
<dbReference type="RefSeq" id="WP_164921111.1">
    <property type="nucleotide sequence ID" value="NC_004113.1"/>
</dbReference>
<dbReference type="SMR" id="Q8DL83"/>
<dbReference type="STRING" id="197221.gene:10747203"/>
<dbReference type="EnsemblBacteria" id="BAC08165">
    <property type="protein sequence ID" value="BAC08165"/>
    <property type="gene ID" value="BAC08165"/>
</dbReference>
<dbReference type="KEGG" id="tel:tlr0613"/>
<dbReference type="PATRIC" id="fig|197221.4.peg.652"/>
<dbReference type="eggNOG" id="COG0320">
    <property type="taxonomic scope" value="Bacteria"/>
</dbReference>
<dbReference type="UniPathway" id="UPA00538">
    <property type="reaction ID" value="UER00593"/>
</dbReference>
<dbReference type="Proteomes" id="UP000000440">
    <property type="component" value="Chromosome"/>
</dbReference>
<dbReference type="GO" id="GO:0005737">
    <property type="term" value="C:cytoplasm"/>
    <property type="evidence" value="ECO:0007669"/>
    <property type="project" value="UniProtKB-SubCell"/>
</dbReference>
<dbReference type="GO" id="GO:0051539">
    <property type="term" value="F:4 iron, 4 sulfur cluster binding"/>
    <property type="evidence" value="ECO:0007669"/>
    <property type="project" value="UniProtKB-UniRule"/>
</dbReference>
<dbReference type="GO" id="GO:0016992">
    <property type="term" value="F:lipoate synthase activity"/>
    <property type="evidence" value="ECO:0007669"/>
    <property type="project" value="UniProtKB-UniRule"/>
</dbReference>
<dbReference type="GO" id="GO:0046872">
    <property type="term" value="F:metal ion binding"/>
    <property type="evidence" value="ECO:0007669"/>
    <property type="project" value="UniProtKB-KW"/>
</dbReference>
<dbReference type="CDD" id="cd01335">
    <property type="entry name" value="Radical_SAM"/>
    <property type="match status" value="1"/>
</dbReference>
<dbReference type="FunFam" id="3.20.20.70:FF:000040">
    <property type="entry name" value="Lipoyl synthase"/>
    <property type="match status" value="1"/>
</dbReference>
<dbReference type="Gene3D" id="3.20.20.70">
    <property type="entry name" value="Aldolase class I"/>
    <property type="match status" value="1"/>
</dbReference>
<dbReference type="HAMAP" id="MF_00206">
    <property type="entry name" value="Lipoyl_synth"/>
    <property type="match status" value="1"/>
</dbReference>
<dbReference type="InterPro" id="IPR013785">
    <property type="entry name" value="Aldolase_TIM"/>
</dbReference>
<dbReference type="InterPro" id="IPR006638">
    <property type="entry name" value="Elp3/MiaA/NifB-like_rSAM"/>
</dbReference>
<dbReference type="InterPro" id="IPR031691">
    <property type="entry name" value="LIAS_N"/>
</dbReference>
<dbReference type="InterPro" id="IPR003698">
    <property type="entry name" value="Lipoyl_synth"/>
</dbReference>
<dbReference type="InterPro" id="IPR007197">
    <property type="entry name" value="rSAM"/>
</dbReference>
<dbReference type="NCBIfam" id="TIGR00510">
    <property type="entry name" value="lipA"/>
    <property type="match status" value="1"/>
</dbReference>
<dbReference type="NCBIfam" id="NF004019">
    <property type="entry name" value="PRK05481.1"/>
    <property type="match status" value="1"/>
</dbReference>
<dbReference type="NCBIfam" id="NF009544">
    <property type="entry name" value="PRK12928.1"/>
    <property type="match status" value="1"/>
</dbReference>
<dbReference type="PANTHER" id="PTHR10949">
    <property type="entry name" value="LIPOYL SYNTHASE"/>
    <property type="match status" value="1"/>
</dbReference>
<dbReference type="PANTHER" id="PTHR10949:SF0">
    <property type="entry name" value="LIPOYL SYNTHASE, MITOCHONDRIAL"/>
    <property type="match status" value="1"/>
</dbReference>
<dbReference type="Pfam" id="PF16881">
    <property type="entry name" value="LIAS_N"/>
    <property type="match status" value="1"/>
</dbReference>
<dbReference type="Pfam" id="PF04055">
    <property type="entry name" value="Radical_SAM"/>
    <property type="match status" value="1"/>
</dbReference>
<dbReference type="PIRSF" id="PIRSF005963">
    <property type="entry name" value="Lipoyl_synth"/>
    <property type="match status" value="1"/>
</dbReference>
<dbReference type="SFLD" id="SFLDF00271">
    <property type="entry name" value="lipoyl_synthase"/>
    <property type="match status" value="1"/>
</dbReference>
<dbReference type="SFLD" id="SFLDS00029">
    <property type="entry name" value="Radical_SAM"/>
    <property type="match status" value="1"/>
</dbReference>
<dbReference type="SMART" id="SM00729">
    <property type="entry name" value="Elp3"/>
    <property type="match status" value="1"/>
</dbReference>
<dbReference type="SUPFAM" id="SSF102114">
    <property type="entry name" value="Radical SAM enzymes"/>
    <property type="match status" value="1"/>
</dbReference>
<dbReference type="PROSITE" id="PS51918">
    <property type="entry name" value="RADICAL_SAM"/>
    <property type="match status" value="1"/>
</dbReference>
<reference key="1">
    <citation type="journal article" date="2002" name="DNA Res.">
        <title>Complete genome structure of the thermophilic cyanobacterium Thermosynechococcus elongatus BP-1.</title>
        <authorList>
            <person name="Nakamura Y."/>
            <person name="Kaneko T."/>
            <person name="Sato S."/>
            <person name="Ikeuchi M."/>
            <person name="Katoh H."/>
            <person name="Sasamoto S."/>
            <person name="Watanabe A."/>
            <person name="Iriguchi M."/>
            <person name="Kawashima K."/>
            <person name="Kimura T."/>
            <person name="Kishida Y."/>
            <person name="Kiyokawa C."/>
            <person name="Kohara M."/>
            <person name="Matsumoto M."/>
            <person name="Matsuno A."/>
            <person name="Nakazaki N."/>
            <person name="Shimpo S."/>
            <person name="Sugimoto M."/>
            <person name="Takeuchi C."/>
            <person name="Yamada M."/>
            <person name="Tabata S."/>
        </authorList>
    </citation>
    <scope>NUCLEOTIDE SEQUENCE [LARGE SCALE GENOMIC DNA]</scope>
    <source>
        <strain>NIES-2133 / IAM M-273 / BP-1</strain>
    </source>
</reference>
<accession>Q8DL83</accession>
<sequence>MVVKPEWLRVKAPQWQRVGSVKELLRDLNLNTVCEEASCPNIGECFYQGTATFLMMGPACTRACPYCDIDFEKKPLPLDPTEPQRLAEAVVRMRLNHVVITSVNRDDLADGGASQFVATIEAVRQRSPQTTIEVLIPDLCGNWQALDQILAAGPEVLNHNTETVPRLYRRVRPQGNYQRSLELLQRVRDRAPWIYSKSGIMVGLGETSEEVVALMQDLRQVGCDILTIGQYLQPSPKHLAVQAFIPPEQFEEWRRLGESMGFLQVVSSPLTRSSYHAEQVRALMQQYPRQRPAPSPLG</sequence>
<gene>
    <name evidence="1" type="primary">lipA1</name>
    <name type="ordered locus">tlr0613</name>
</gene>
<evidence type="ECO:0000255" key="1">
    <source>
        <dbReference type="HAMAP-Rule" id="MF_00206"/>
    </source>
</evidence>
<evidence type="ECO:0000255" key="2">
    <source>
        <dbReference type="PROSITE-ProRule" id="PRU01266"/>
    </source>
</evidence>
<evidence type="ECO:0000305" key="3"/>
<feature type="chain" id="PRO_0000102368" description="Lipoyl synthase 1">
    <location>
        <begin position="1"/>
        <end position="298"/>
    </location>
</feature>
<feature type="domain" description="Radical SAM core" evidence="2">
    <location>
        <begin position="46"/>
        <end position="263"/>
    </location>
</feature>
<feature type="binding site" evidence="1">
    <location>
        <position position="34"/>
    </location>
    <ligand>
        <name>[4Fe-4S] cluster</name>
        <dbReference type="ChEBI" id="CHEBI:49883"/>
        <label>1</label>
    </ligand>
</feature>
<feature type="binding site" evidence="1">
    <location>
        <position position="39"/>
    </location>
    <ligand>
        <name>[4Fe-4S] cluster</name>
        <dbReference type="ChEBI" id="CHEBI:49883"/>
        <label>1</label>
    </ligand>
</feature>
<feature type="binding site" evidence="1">
    <location>
        <position position="45"/>
    </location>
    <ligand>
        <name>[4Fe-4S] cluster</name>
        <dbReference type="ChEBI" id="CHEBI:49883"/>
        <label>1</label>
    </ligand>
</feature>
<feature type="binding site" evidence="1">
    <location>
        <position position="60"/>
    </location>
    <ligand>
        <name>[4Fe-4S] cluster</name>
        <dbReference type="ChEBI" id="CHEBI:49883"/>
        <label>2</label>
        <note>4Fe-4S-S-AdoMet</note>
    </ligand>
</feature>
<feature type="binding site" evidence="1">
    <location>
        <position position="64"/>
    </location>
    <ligand>
        <name>[4Fe-4S] cluster</name>
        <dbReference type="ChEBI" id="CHEBI:49883"/>
        <label>2</label>
        <note>4Fe-4S-S-AdoMet</note>
    </ligand>
</feature>
<feature type="binding site" evidence="1">
    <location>
        <position position="67"/>
    </location>
    <ligand>
        <name>[4Fe-4S] cluster</name>
        <dbReference type="ChEBI" id="CHEBI:49883"/>
        <label>2</label>
        <note>4Fe-4S-S-AdoMet</note>
    </ligand>
</feature>
<feature type="binding site" evidence="1">
    <location>
        <position position="274"/>
    </location>
    <ligand>
        <name>[4Fe-4S] cluster</name>
        <dbReference type="ChEBI" id="CHEBI:49883"/>
        <label>1</label>
    </ligand>
</feature>
<protein>
    <recommendedName>
        <fullName evidence="1">Lipoyl synthase 1</fullName>
        <ecNumber evidence="1">2.8.1.8</ecNumber>
    </recommendedName>
    <alternativeName>
        <fullName evidence="1">Lip-syn 1</fullName>
        <shortName evidence="1">LS 1</shortName>
    </alternativeName>
    <alternativeName>
        <fullName evidence="1">Lipoate synthase 1</fullName>
    </alternativeName>
    <alternativeName>
        <fullName evidence="1">Lipoic acid synthase 1</fullName>
    </alternativeName>
    <alternativeName>
        <fullName evidence="1">Sulfur insertion protein LipA 1</fullName>
    </alternativeName>
</protein>
<organism>
    <name type="scientific">Thermosynechococcus vestitus (strain NIES-2133 / IAM M-273 / BP-1)</name>
    <dbReference type="NCBI Taxonomy" id="197221"/>
    <lineage>
        <taxon>Bacteria</taxon>
        <taxon>Bacillati</taxon>
        <taxon>Cyanobacteriota</taxon>
        <taxon>Cyanophyceae</taxon>
        <taxon>Acaryochloridales</taxon>
        <taxon>Thermosynechococcaceae</taxon>
        <taxon>Thermosynechococcus</taxon>
    </lineage>
</organism>
<keyword id="KW-0004">4Fe-4S</keyword>
<keyword id="KW-0963">Cytoplasm</keyword>
<keyword id="KW-0408">Iron</keyword>
<keyword id="KW-0411">Iron-sulfur</keyword>
<keyword id="KW-0479">Metal-binding</keyword>
<keyword id="KW-1185">Reference proteome</keyword>
<keyword id="KW-0949">S-adenosyl-L-methionine</keyword>
<keyword id="KW-0808">Transferase</keyword>